<keyword id="KW-0067">ATP-binding</keyword>
<keyword id="KW-0436">Ligase</keyword>
<keyword id="KW-0460">Magnesium</keyword>
<keyword id="KW-0547">Nucleotide-binding</keyword>
<keyword id="KW-1185">Reference proteome</keyword>
<reference key="1">
    <citation type="journal article" date="2005" name="Nature">
        <title>The map-based sequence of the rice genome.</title>
        <authorList>
            <consortium name="International rice genome sequencing project (IRGSP)"/>
        </authorList>
    </citation>
    <scope>NUCLEOTIDE SEQUENCE [LARGE SCALE GENOMIC DNA]</scope>
    <source>
        <strain>cv. Nipponbare</strain>
    </source>
</reference>
<reference key="2">
    <citation type="journal article" date="2008" name="Nucleic Acids Res.">
        <title>The rice annotation project database (RAP-DB): 2008 update.</title>
        <authorList>
            <consortium name="The rice annotation project (RAP)"/>
        </authorList>
    </citation>
    <scope>GENOME REANNOTATION</scope>
    <source>
        <strain>cv. Nipponbare</strain>
    </source>
</reference>
<reference key="3">
    <citation type="journal article" date="2013" name="Rice">
        <title>Improvement of the Oryza sativa Nipponbare reference genome using next generation sequence and optical map data.</title>
        <authorList>
            <person name="Kawahara Y."/>
            <person name="de la Bastide M."/>
            <person name="Hamilton J.P."/>
            <person name="Kanamori H."/>
            <person name="McCombie W.R."/>
            <person name="Ouyang S."/>
            <person name="Schwartz D.C."/>
            <person name="Tanaka T."/>
            <person name="Wu J."/>
            <person name="Zhou S."/>
            <person name="Childs K.L."/>
            <person name="Davidson R.M."/>
            <person name="Lin H."/>
            <person name="Quesada-Ocampo L."/>
            <person name="Vaillancourt B."/>
            <person name="Sakai H."/>
            <person name="Lee S.S."/>
            <person name="Kim J."/>
            <person name="Numa H."/>
            <person name="Itoh T."/>
            <person name="Buell C.R."/>
            <person name="Matsumoto T."/>
        </authorList>
    </citation>
    <scope>GENOME REANNOTATION</scope>
    <source>
        <strain>cv. Nipponbare</strain>
    </source>
</reference>
<reference key="4">
    <citation type="journal article" date="2008" name="New Phytol.">
        <title>Genome-wide analysis of a land plant-specific acyl:coenzyme A synthetase (ACS) gene family in Arabidopsis, poplar, rice and Physcomitrella.</title>
        <authorList>
            <person name="de Azevedo Souza C."/>
            <person name="Barbazuk B."/>
            <person name="Ralph S.G."/>
            <person name="Bohlmann J."/>
            <person name="Hamberger B."/>
            <person name="Douglas C.J."/>
        </authorList>
    </citation>
    <scope>GENE FAMILY</scope>
</reference>
<evidence type="ECO:0000250" key="1">
    <source>
        <dbReference type="UniProtKB" id="O24146"/>
    </source>
</evidence>
<evidence type="ECO:0000250" key="2">
    <source>
        <dbReference type="UniProtKB" id="Q42524"/>
    </source>
</evidence>
<evidence type="ECO:0000305" key="3"/>
<gene>
    <name type="primary">4CLL3</name>
    <name type="ordered locus">Os08g0143300</name>
    <name type="ordered locus">LOC_Os08g04770</name>
    <name type="ORF">P0025F03.16</name>
    <name type="ORF">P0473D02.38</name>
</gene>
<feature type="chain" id="PRO_0000351629" description="4-coumarate--CoA ligase-like 3">
    <location>
        <begin position="1"/>
        <end position="591"/>
    </location>
</feature>
<feature type="region of interest" description="SBD1">
    <location>
        <begin position="303"/>
        <end position="375"/>
    </location>
</feature>
<feature type="region of interest" description="SBD2">
    <location>
        <begin position="376"/>
        <end position="440"/>
    </location>
</feature>
<feature type="binding site" evidence="1">
    <location>
        <position position="228"/>
    </location>
    <ligand>
        <name>ATP</name>
        <dbReference type="ChEBI" id="CHEBI:30616"/>
    </ligand>
</feature>
<feature type="binding site" evidence="1">
    <location>
        <position position="229"/>
    </location>
    <ligand>
        <name>ATP</name>
        <dbReference type="ChEBI" id="CHEBI:30616"/>
    </ligand>
</feature>
<feature type="binding site" evidence="1">
    <location>
        <position position="230"/>
    </location>
    <ligand>
        <name>ATP</name>
        <dbReference type="ChEBI" id="CHEBI:30616"/>
    </ligand>
</feature>
<feature type="binding site" evidence="1">
    <location>
        <position position="231"/>
    </location>
    <ligand>
        <name>ATP</name>
        <dbReference type="ChEBI" id="CHEBI:30616"/>
    </ligand>
</feature>
<feature type="binding site" evidence="1">
    <location>
        <position position="232"/>
    </location>
    <ligand>
        <name>ATP</name>
        <dbReference type="ChEBI" id="CHEBI:30616"/>
    </ligand>
</feature>
<feature type="binding site" evidence="1">
    <location>
        <position position="236"/>
    </location>
    <ligand>
        <name>ATP</name>
        <dbReference type="ChEBI" id="CHEBI:30616"/>
    </ligand>
</feature>
<feature type="binding site" evidence="1">
    <location>
        <position position="280"/>
    </location>
    <ligand>
        <name>(E)-4-coumaroyl-AMP</name>
        <dbReference type="ChEBI" id="CHEBI:192348"/>
    </ligand>
</feature>
<feature type="binding site" evidence="1">
    <location>
        <position position="301"/>
    </location>
    <ligand>
        <name>CoA</name>
        <dbReference type="ChEBI" id="CHEBI:57287"/>
    </ligand>
</feature>
<feature type="binding site" evidence="1">
    <location>
        <position position="353"/>
    </location>
    <ligand>
        <name>(E)-4-coumaroyl-AMP</name>
        <dbReference type="ChEBI" id="CHEBI:192348"/>
    </ligand>
</feature>
<feature type="binding site" evidence="1">
    <location>
        <position position="375"/>
    </location>
    <ligand>
        <name>(E)-4-coumaroyl-AMP</name>
        <dbReference type="ChEBI" id="CHEBI:192348"/>
    </ligand>
</feature>
<feature type="binding site" evidence="1">
    <location>
        <position position="375"/>
    </location>
    <ligand>
        <name>ATP</name>
        <dbReference type="ChEBI" id="CHEBI:30616"/>
    </ligand>
</feature>
<feature type="binding site" evidence="1">
    <location>
        <position position="376"/>
    </location>
    <ligand>
        <name>(E)-4-coumaroyl-AMP</name>
        <dbReference type="ChEBI" id="CHEBI:192348"/>
    </ligand>
</feature>
<feature type="binding site" evidence="1">
    <location>
        <position position="376"/>
    </location>
    <ligand>
        <name>ATP</name>
        <dbReference type="ChEBI" id="CHEBI:30616"/>
    </ligand>
</feature>
<feature type="binding site" evidence="1">
    <location>
        <position position="380"/>
    </location>
    <ligand>
        <name>(E)-4-coumaroyl-AMP</name>
        <dbReference type="ChEBI" id="CHEBI:192348"/>
    </ligand>
</feature>
<feature type="binding site" evidence="1">
    <location>
        <position position="380"/>
    </location>
    <ligand>
        <name>ATP</name>
        <dbReference type="ChEBI" id="CHEBI:30616"/>
    </ligand>
</feature>
<feature type="binding site" evidence="1">
    <location>
        <position position="459"/>
    </location>
    <ligand>
        <name>ATP</name>
        <dbReference type="ChEBI" id="CHEBI:30616"/>
    </ligand>
</feature>
<feature type="binding site" evidence="1">
    <location>
        <position position="474"/>
    </location>
    <ligand>
        <name>ATP</name>
        <dbReference type="ChEBI" id="CHEBI:30616"/>
    </ligand>
</feature>
<feature type="binding site" evidence="1">
    <location>
        <position position="476"/>
    </location>
    <ligand>
        <name>(E)-4-coumaroyl-AMP</name>
        <dbReference type="ChEBI" id="CHEBI:192348"/>
    </ligand>
</feature>
<feature type="binding site" evidence="1">
    <location>
        <position position="480"/>
    </location>
    <ligand>
        <name>(E)-4-coumaroyl-AMP</name>
        <dbReference type="ChEBI" id="CHEBI:192348"/>
    </ligand>
</feature>
<feature type="binding site" evidence="1">
    <location>
        <position position="482"/>
    </location>
    <ligand>
        <name>CoA</name>
        <dbReference type="ChEBI" id="CHEBI:57287"/>
    </ligand>
</feature>
<feature type="binding site" evidence="1">
    <location>
        <position position="483"/>
    </location>
    <ligand>
        <name>CoA</name>
        <dbReference type="ChEBI" id="CHEBI:57287"/>
    </ligand>
</feature>
<feature type="binding site" evidence="1">
    <location>
        <position position="565"/>
    </location>
    <ligand>
        <name>ATP</name>
        <dbReference type="ChEBI" id="CHEBI:30616"/>
    </ligand>
</feature>
<dbReference type="EC" id="6.2.1.12" evidence="1"/>
<dbReference type="EMBL" id="AP004381">
    <property type="protein sequence ID" value="BAD17022.1"/>
    <property type="molecule type" value="Genomic_DNA"/>
</dbReference>
<dbReference type="EMBL" id="AP005542">
    <property type="protein sequence ID" value="BAD13196.1"/>
    <property type="molecule type" value="Genomic_DNA"/>
</dbReference>
<dbReference type="EMBL" id="AP008214">
    <property type="protein sequence ID" value="BAH94104.1"/>
    <property type="molecule type" value="Genomic_DNA"/>
</dbReference>
<dbReference type="EMBL" id="AP014964">
    <property type="protein sequence ID" value="BAT03799.1"/>
    <property type="molecule type" value="Genomic_DNA"/>
</dbReference>
<dbReference type="SMR" id="Q6YYZ2"/>
<dbReference type="FunCoup" id="Q6YYZ2">
    <property type="interactions" value="1459"/>
</dbReference>
<dbReference type="STRING" id="39947.Q6YYZ2"/>
<dbReference type="PaxDb" id="39947-Q6YYZ2"/>
<dbReference type="EnsemblPlants" id="Os08t0143300-00">
    <property type="protein sequence ID" value="Os08t0143300-00"/>
    <property type="gene ID" value="Os08g0143300"/>
</dbReference>
<dbReference type="GeneID" id="9269113"/>
<dbReference type="Gramene" id="Os08t0143300-00">
    <property type="protein sequence ID" value="Os08t0143300-00"/>
    <property type="gene ID" value="Os08g0143300"/>
</dbReference>
<dbReference type="KEGG" id="dosa:Os08g0143300"/>
<dbReference type="KEGG" id="osa:9269113"/>
<dbReference type="eggNOG" id="KOG1176">
    <property type="taxonomic scope" value="Eukaryota"/>
</dbReference>
<dbReference type="HOGENOM" id="CLU_000022_59_2_1"/>
<dbReference type="InParanoid" id="Q6YYZ2"/>
<dbReference type="OMA" id="YIMPKFD"/>
<dbReference type="OrthoDB" id="10253869at2759"/>
<dbReference type="PlantReactome" id="R-OSA-1119316">
    <property type="pathway name" value="Phenylpropanoid biosynthesis"/>
</dbReference>
<dbReference type="PlantReactome" id="R-OSA-1119531">
    <property type="pathway name" value="Flavonoid biosynthesis"/>
</dbReference>
<dbReference type="Proteomes" id="UP000000763">
    <property type="component" value="Chromosome 8"/>
</dbReference>
<dbReference type="Proteomes" id="UP000059680">
    <property type="component" value="Chromosome 8"/>
</dbReference>
<dbReference type="GO" id="GO:0005777">
    <property type="term" value="C:peroxisome"/>
    <property type="evidence" value="ECO:0000318"/>
    <property type="project" value="GO_Central"/>
</dbReference>
<dbReference type="GO" id="GO:0016207">
    <property type="term" value="F:4-coumarate-CoA ligase activity"/>
    <property type="evidence" value="ECO:0007669"/>
    <property type="project" value="UniProtKB-ARBA"/>
</dbReference>
<dbReference type="GO" id="GO:0005524">
    <property type="term" value="F:ATP binding"/>
    <property type="evidence" value="ECO:0007669"/>
    <property type="project" value="UniProtKB-KW"/>
</dbReference>
<dbReference type="GO" id="GO:0016405">
    <property type="term" value="F:CoA-ligase activity"/>
    <property type="evidence" value="ECO:0000318"/>
    <property type="project" value="GO_Central"/>
</dbReference>
<dbReference type="GO" id="GO:0106290">
    <property type="term" value="F:trans-cinnamate-CoA ligase activity"/>
    <property type="evidence" value="ECO:0007669"/>
    <property type="project" value="UniProtKB-ARBA"/>
</dbReference>
<dbReference type="GO" id="GO:0009698">
    <property type="term" value="P:phenylpropanoid metabolic process"/>
    <property type="evidence" value="ECO:0007669"/>
    <property type="project" value="UniProtKB-ARBA"/>
</dbReference>
<dbReference type="GO" id="GO:0006744">
    <property type="term" value="P:ubiquinone biosynthetic process"/>
    <property type="evidence" value="ECO:0000318"/>
    <property type="project" value="GO_Central"/>
</dbReference>
<dbReference type="CDD" id="cd05904">
    <property type="entry name" value="4CL"/>
    <property type="match status" value="1"/>
</dbReference>
<dbReference type="FunFam" id="3.30.300.30:FF:000007">
    <property type="entry name" value="4-coumarate--CoA ligase 2"/>
    <property type="match status" value="1"/>
</dbReference>
<dbReference type="Gene3D" id="3.30.300.30">
    <property type="match status" value="1"/>
</dbReference>
<dbReference type="Gene3D" id="3.40.50.12780">
    <property type="entry name" value="N-terminal domain of ligase-like"/>
    <property type="match status" value="1"/>
</dbReference>
<dbReference type="InterPro" id="IPR025110">
    <property type="entry name" value="AMP-bd_C"/>
</dbReference>
<dbReference type="InterPro" id="IPR045851">
    <property type="entry name" value="AMP-bd_C_sf"/>
</dbReference>
<dbReference type="InterPro" id="IPR020845">
    <property type="entry name" value="AMP-binding_CS"/>
</dbReference>
<dbReference type="InterPro" id="IPR000873">
    <property type="entry name" value="AMP-dep_synth/lig_dom"/>
</dbReference>
<dbReference type="InterPro" id="IPR042099">
    <property type="entry name" value="ANL_N_sf"/>
</dbReference>
<dbReference type="PANTHER" id="PTHR24096:SF149">
    <property type="entry name" value="AMP-BINDING DOMAIN-CONTAINING PROTEIN-RELATED"/>
    <property type="match status" value="1"/>
</dbReference>
<dbReference type="PANTHER" id="PTHR24096">
    <property type="entry name" value="LONG-CHAIN-FATTY-ACID--COA LIGASE"/>
    <property type="match status" value="1"/>
</dbReference>
<dbReference type="Pfam" id="PF00501">
    <property type="entry name" value="AMP-binding"/>
    <property type="match status" value="1"/>
</dbReference>
<dbReference type="Pfam" id="PF13193">
    <property type="entry name" value="AMP-binding_C"/>
    <property type="match status" value="1"/>
</dbReference>
<dbReference type="SUPFAM" id="SSF56801">
    <property type="entry name" value="Acetyl-CoA synthetase-like"/>
    <property type="match status" value="1"/>
</dbReference>
<dbReference type="PROSITE" id="PS00455">
    <property type="entry name" value="AMP_BINDING"/>
    <property type="match status" value="1"/>
</dbReference>
<accession>Q6YYZ2</accession>
<accession>C7J6B0</accession>
<sequence length="591" mass="62081">MQRDAIAAARNAGCSSGRISQPPPPPFYSAATGIYSSIHPPVALPTDPSLTLVAHLFARLPLADPGAPTLVDAATASAVSRADLRRLVASLAAGLRRRHGVRKGSVVLLLLPNSVAFPVSFLAVLAAGAVATTMNPSSSPAEIAAQARATGACLVLASRDGAARLPPLAAPVVLVPEILDHSAAADDGDDDQRVFAAFRAMLDGGGGDGTETAVPVVGQDDAVAILYSSGTSGRSKGVVLTHRNLIAMTELFVRFEASQYHARGARENVYMAALPMSHVYGLSLFAVGLLSIGATVVVMRRFDAGDAVAAIGRYKVTHMPLVPPIMAAMVRAAAAGGVPPSQVASLVQVSCGAAPITAALIHEFLQAFPHVDFIQGYGMTESTAVGTRGFNTSKHKKYTSVGLLAPNMHAKIVHLESSSCLPPGFSGELWLHGPGIMKGYLSDDDDACTRKDGWLRTGDIAYFDLDGYLYIVGRLKDTIKYKGFQIAPGDLEEVLIHHPEILDVAVTSAEDEEAGEIPVAFVVRRSGSNLSCKQVMEYVAKQVAPYKRVRKVVFVEAIPKSPAGKVLRRLLRNSHDTAAAATSSCSISSKL</sequence>
<proteinExistence type="inferred from homology"/>
<name>4CLL3_ORYSJ</name>
<protein>
    <recommendedName>
        <fullName>4-coumarate--CoA ligase-like 3</fullName>
        <ecNumber evidence="1">6.2.1.12</ecNumber>
    </recommendedName>
</protein>
<organism>
    <name type="scientific">Oryza sativa subsp. japonica</name>
    <name type="common">Rice</name>
    <dbReference type="NCBI Taxonomy" id="39947"/>
    <lineage>
        <taxon>Eukaryota</taxon>
        <taxon>Viridiplantae</taxon>
        <taxon>Streptophyta</taxon>
        <taxon>Embryophyta</taxon>
        <taxon>Tracheophyta</taxon>
        <taxon>Spermatophyta</taxon>
        <taxon>Magnoliopsida</taxon>
        <taxon>Liliopsida</taxon>
        <taxon>Poales</taxon>
        <taxon>Poaceae</taxon>
        <taxon>BOP clade</taxon>
        <taxon>Oryzoideae</taxon>
        <taxon>Oryzeae</taxon>
        <taxon>Oryzinae</taxon>
        <taxon>Oryza</taxon>
        <taxon>Oryza sativa</taxon>
    </lineage>
</organism>
<comment type="function">
    <text evidence="1">Carboxylate--CoA ligase that may use 4-coumarate as substrate. Follows a two-step reaction mechanism, wherein the carboxylate substrate first undergoes adenylation by ATP, followed by a thioesterification in the presence of CoA to yield the final CoA thioester.</text>
</comment>
<comment type="catalytic activity">
    <reaction evidence="1">
        <text>(E)-4-coumarate + ATP + CoA = (E)-4-coumaroyl-CoA + AMP + diphosphate</text>
        <dbReference type="Rhea" id="RHEA:19641"/>
        <dbReference type="ChEBI" id="CHEBI:12876"/>
        <dbReference type="ChEBI" id="CHEBI:30616"/>
        <dbReference type="ChEBI" id="CHEBI:33019"/>
        <dbReference type="ChEBI" id="CHEBI:57287"/>
        <dbReference type="ChEBI" id="CHEBI:85008"/>
        <dbReference type="ChEBI" id="CHEBI:456215"/>
        <dbReference type="EC" id="6.2.1.12"/>
    </reaction>
    <physiologicalReaction direction="left-to-right" evidence="1">
        <dbReference type="Rhea" id="RHEA:19642"/>
    </physiologicalReaction>
</comment>
<comment type="catalytic activity">
    <reaction evidence="1">
        <text>(E)-4-coumarate + ATP + H(+) = (E)-4-coumaroyl-AMP + diphosphate</text>
        <dbReference type="Rhea" id="RHEA:72419"/>
        <dbReference type="ChEBI" id="CHEBI:12876"/>
        <dbReference type="ChEBI" id="CHEBI:15378"/>
        <dbReference type="ChEBI" id="CHEBI:30616"/>
        <dbReference type="ChEBI" id="CHEBI:33019"/>
        <dbReference type="ChEBI" id="CHEBI:192348"/>
    </reaction>
    <physiologicalReaction direction="left-to-right" evidence="1">
        <dbReference type="Rhea" id="RHEA:72420"/>
    </physiologicalReaction>
</comment>
<comment type="catalytic activity">
    <reaction evidence="1">
        <text>(E)-4-coumaroyl-AMP + CoA = (E)-4-coumaroyl-CoA + AMP + H(+)</text>
        <dbReference type="Rhea" id="RHEA:72423"/>
        <dbReference type="ChEBI" id="CHEBI:15378"/>
        <dbReference type="ChEBI" id="CHEBI:57287"/>
        <dbReference type="ChEBI" id="CHEBI:85008"/>
        <dbReference type="ChEBI" id="CHEBI:192348"/>
        <dbReference type="ChEBI" id="CHEBI:456215"/>
    </reaction>
    <physiologicalReaction direction="left-to-right" evidence="1">
        <dbReference type="Rhea" id="RHEA:72424"/>
    </physiologicalReaction>
</comment>
<comment type="cofactor">
    <cofactor evidence="1">
        <name>Mg(2+)</name>
        <dbReference type="ChEBI" id="CHEBI:18420"/>
    </cofactor>
</comment>
<comment type="domain">
    <text evidence="2">Both substrate-binding domains (SBD1 and SBD2) are involved in the substrate recognition, and are sufficient to confer the substrate specificity.</text>
</comment>
<comment type="similarity">
    <text evidence="3">Belongs to the ATP-dependent AMP-binding enzyme family.</text>
</comment>